<dbReference type="EMBL" id="J05593">
    <property type="protein sequence ID" value="AAA61186.1"/>
    <property type="molecule type" value="mRNA"/>
</dbReference>
<dbReference type="EMBL" id="S48568">
    <property type="protein sequence ID" value="AAB19474.1"/>
    <property type="molecule type" value="mRNA"/>
</dbReference>
<dbReference type="EMBL" id="U44385">
    <property type="protein sequence ID" value="AAC50729.1"/>
    <property type="molecule type" value="Genomic_DNA"/>
</dbReference>
<dbReference type="EMBL" id="U44381">
    <property type="protein sequence ID" value="AAC50729.1"/>
    <property type="status" value="JOINED"/>
    <property type="molecule type" value="Genomic_DNA"/>
</dbReference>
<dbReference type="EMBL" id="U44382">
    <property type="protein sequence ID" value="AAC50729.1"/>
    <property type="status" value="JOINED"/>
    <property type="molecule type" value="Genomic_DNA"/>
</dbReference>
<dbReference type="EMBL" id="U44383">
    <property type="protein sequence ID" value="AAC50729.1"/>
    <property type="status" value="JOINED"/>
    <property type="molecule type" value="Genomic_DNA"/>
</dbReference>
<dbReference type="EMBL" id="M32304">
    <property type="protein sequence ID" value="AAA59581.1"/>
    <property type="molecule type" value="mRNA"/>
</dbReference>
<dbReference type="EMBL" id="BC052605">
    <property type="protein sequence ID" value="AAH52605.1"/>
    <property type="molecule type" value="mRNA"/>
</dbReference>
<dbReference type="EMBL" id="BC071586">
    <property type="protein sequence ID" value="AAH71586.1"/>
    <property type="molecule type" value="mRNA"/>
</dbReference>
<dbReference type="EMBL" id="X54533">
    <property type="protein sequence ID" value="CAA38400.1"/>
    <property type="molecule type" value="mRNA"/>
</dbReference>
<dbReference type="EMBL" id="S68860">
    <property type="protein sequence ID" value="AAD14025.1"/>
    <property type="molecule type" value="Genomic_DNA"/>
</dbReference>
<dbReference type="CCDS" id="CCDS11758.1"/>
<dbReference type="PIR" id="A37128">
    <property type="entry name" value="A37128"/>
</dbReference>
<dbReference type="PIR" id="I53729">
    <property type="entry name" value="I53729"/>
</dbReference>
<dbReference type="RefSeq" id="NP_003246.1">
    <property type="nucleotide sequence ID" value="NM_003255.5"/>
</dbReference>
<dbReference type="PDB" id="1BR9">
    <property type="method" value="X-ray"/>
    <property type="resolution" value="2.10 A"/>
    <property type="chains" value="A=27-220"/>
</dbReference>
<dbReference type="PDB" id="1GXD">
    <property type="method" value="X-ray"/>
    <property type="resolution" value="3.10 A"/>
    <property type="chains" value="C/D=27-220"/>
</dbReference>
<dbReference type="PDB" id="2TMP">
    <property type="method" value="NMR"/>
    <property type="chains" value="A=27-153"/>
</dbReference>
<dbReference type="PDB" id="4ILW">
    <property type="method" value="X-ray"/>
    <property type="resolution" value="2.10 A"/>
    <property type="chains" value="A/B=27-220"/>
</dbReference>
<dbReference type="PDBsum" id="1BR9"/>
<dbReference type="PDBsum" id="1GXD"/>
<dbReference type="PDBsum" id="2TMP"/>
<dbReference type="PDBsum" id="4ILW"/>
<dbReference type="BMRB" id="P16035"/>
<dbReference type="SMR" id="P16035"/>
<dbReference type="BioGRID" id="112933">
    <property type="interactions" value="285"/>
</dbReference>
<dbReference type="CORUM" id="P16035"/>
<dbReference type="FunCoup" id="P16035">
    <property type="interactions" value="222"/>
</dbReference>
<dbReference type="IntAct" id="P16035">
    <property type="interactions" value="15"/>
</dbReference>
<dbReference type="MINT" id="P16035"/>
<dbReference type="STRING" id="9606.ENSP00000262768"/>
<dbReference type="MEROPS" id="I35.002"/>
<dbReference type="iPTMnet" id="P16035"/>
<dbReference type="PhosphoSitePlus" id="P16035"/>
<dbReference type="SwissPalm" id="P16035"/>
<dbReference type="BioMuta" id="TIMP2"/>
<dbReference type="DMDM" id="135854"/>
<dbReference type="jPOST" id="P16035"/>
<dbReference type="MassIVE" id="P16035"/>
<dbReference type="PaxDb" id="9606-ENSP00000262768"/>
<dbReference type="PeptideAtlas" id="P16035"/>
<dbReference type="ProteomicsDB" id="53263"/>
<dbReference type="Pumba" id="P16035"/>
<dbReference type="TopDownProteomics" id="P16035"/>
<dbReference type="Antibodypedia" id="4126">
    <property type="antibodies" value="1274 antibodies from 45 providers"/>
</dbReference>
<dbReference type="DNASU" id="7077"/>
<dbReference type="Ensembl" id="ENST00000262768.11">
    <property type="protein sequence ID" value="ENSP00000262768.6"/>
    <property type="gene ID" value="ENSG00000035862.13"/>
</dbReference>
<dbReference type="GeneID" id="7077"/>
<dbReference type="KEGG" id="hsa:7077"/>
<dbReference type="MANE-Select" id="ENST00000262768.11">
    <property type="protein sequence ID" value="ENSP00000262768.6"/>
    <property type="RefSeq nucleotide sequence ID" value="NM_003255.5"/>
    <property type="RefSeq protein sequence ID" value="NP_003246.1"/>
</dbReference>
<dbReference type="UCSC" id="uc002jwf.4">
    <property type="organism name" value="human"/>
</dbReference>
<dbReference type="AGR" id="HGNC:11821"/>
<dbReference type="CTD" id="7077"/>
<dbReference type="DisGeNET" id="7077"/>
<dbReference type="GeneCards" id="TIMP2"/>
<dbReference type="HGNC" id="HGNC:11821">
    <property type="gene designation" value="TIMP2"/>
</dbReference>
<dbReference type="HPA" id="ENSG00000035862">
    <property type="expression patterns" value="Tissue enhanced (ovary)"/>
</dbReference>
<dbReference type="MIM" id="188825">
    <property type="type" value="gene"/>
</dbReference>
<dbReference type="neXtProt" id="NX_P16035"/>
<dbReference type="OpenTargets" id="ENSG00000035862"/>
<dbReference type="PharmGKB" id="PA36527"/>
<dbReference type="VEuPathDB" id="HostDB:ENSG00000035862"/>
<dbReference type="eggNOG" id="KOG4745">
    <property type="taxonomic scope" value="Eukaryota"/>
</dbReference>
<dbReference type="GeneTree" id="ENSGT00940000158348"/>
<dbReference type="InParanoid" id="P16035"/>
<dbReference type="OMA" id="FIEPWDS"/>
<dbReference type="OrthoDB" id="6041373at2759"/>
<dbReference type="PAN-GO" id="P16035">
    <property type="GO annotations" value="8 GO annotations based on evolutionary models"/>
</dbReference>
<dbReference type="PhylomeDB" id="P16035"/>
<dbReference type="TreeFam" id="TF317409"/>
<dbReference type="BRENDA" id="3.4.24.22">
    <property type="organism ID" value="2681"/>
</dbReference>
<dbReference type="PathwayCommons" id="P16035"/>
<dbReference type="Reactome" id="R-HSA-1592389">
    <property type="pathway name" value="Activation of Matrix Metalloproteinases"/>
</dbReference>
<dbReference type="Reactome" id="R-HSA-6798695">
    <property type="pathway name" value="Neutrophil degranulation"/>
</dbReference>
<dbReference type="Reactome" id="R-HSA-9839383">
    <property type="pathway name" value="TGFBR3 PTM regulation"/>
</dbReference>
<dbReference type="SignaLink" id="P16035"/>
<dbReference type="SIGNOR" id="P16035"/>
<dbReference type="BioGRID-ORCS" id="7077">
    <property type="hits" value="20 hits in 1153 CRISPR screens"/>
</dbReference>
<dbReference type="ChiTaRS" id="TIMP2">
    <property type="organism name" value="human"/>
</dbReference>
<dbReference type="EvolutionaryTrace" id="P16035"/>
<dbReference type="GeneWiki" id="TIMP2"/>
<dbReference type="GenomeRNAi" id="7077"/>
<dbReference type="Pharos" id="P16035">
    <property type="development level" value="Tbio"/>
</dbReference>
<dbReference type="PRO" id="PR:P16035"/>
<dbReference type="Proteomes" id="UP000005640">
    <property type="component" value="Chromosome 17"/>
</dbReference>
<dbReference type="RNAct" id="P16035">
    <property type="molecule type" value="protein"/>
</dbReference>
<dbReference type="Bgee" id="ENSG00000035862">
    <property type="expression patterns" value="Expressed in tendon of biceps brachii and 199 other cell types or tissues"/>
</dbReference>
<dbReference type="ExpressionAtlas" id="P16035">
    <property type="expression patterns" value="baseline and differential"/>
</dbReference>
<dbReference type="GO" id="GO:0062023">
    <property type="term" value="C:collagen-containing extracellular matrix"/>
    <property type="evidence" value="ECO:0007005"/>
    <property type="project" value="BHF-UCL"/>
</dbReference>
<dbReference type="GO" id="GO:0031012">
    <property type="term" value="C:extracellular matrix"/>
    <property type="evidence" value="ECO:0000318"/>
    <property type="project" value="GO_Central"/>
</dbReference>
<dbReference type="GO" id="GO:0005576">
    <property type="term" value="C:extracellular region"/>
    <property type="evidence" value="ECO:0000304"/>
    <property type="project" value="Reactome"/>
</dbReference>
<dbReference type="GO" id="GO:0005615">
    <property type="term" value="C:extracellular space"/>
    <property type="evidence" value="ECO:0000318"/>
    <property type="project" value="GO_Central"/>
</dbReference>
<dbReference type="GO" id="GO:1904813">
    <property type="term" value="C:ficolin-1-rich granule lumen"/>
    <property type="evidence" value="ECO:0000304"/>
    <property type="project" value="Reactome"/>
</dbReference>
<dbReference type="GO" id="GO:0035580">
    <property type="term" value="C:specific granule lumen"/>
    <property type="evidence" value="ECO:0000304"/>
    <property type="project" value="Reactome"/>
</dbReference>
<dbReference type="GO" id="GO:1904724">
    <property type="term" value="C:tertiary granule lumen"/>
    <property type="evidence" value="ECO:0000304"/>
    <property type="project" value="Reactome"/>
</dbReference>
<dbReference type="GO" id="GO:0008191">
    <property type="term" value="F:metalloendopeptidase inhibitor activity"/>
    <property type="evidence" value="ECO:0000318"/>
    <property type="project" value="GO_Central"/>
</dbReference>
<dbReference type="GO" id="GO:0140678">
    <property type="term" value="F:molecular function inhibitor activity"/>
    <property type="evidence" value="ECO:0000315"/>
    <property type="project" value="DisProt"/>
</dbReference>
<dbReference type="GO" id="GO:0030414">
    <property type="term" value="F:peptidase inhibitor activity"/>
    <property type="evidence" value="ECO:0000314"/>
    <property type="project" value="UniProtKB"/>
</dbReference>
<dbReference type="GO" id="GO:0002020">
    <property type="term" value="F:protease binding"/>
    <property type="evidence" value="ECO:0000353"/>
    <property type="project" value="UniProtKB"/>
</dbReference>
<dbReference type="GO" id="GO:0008270">
    <property type="term" value="F:zinc ion binding"/>
    <property type="evidence" value="ECO:0000314"/>
    <property type="project" value="UniProtKB"/>
</dbReference>
<dbReference type="GO" id="GO:0051045">
    <property type="term" value="P:negative regulation of membrane protein ectodomain proteolysis"/>
    <property type="evidence" value="ECO:0000318"/>
    <property type="project" value="GO_Central"/>
</dbReference>
<dbReference type="GO" id="GO:1905049">
    <property type="term" value="P:negative regulation of metallopeptidase activity"/>
    <property type="evidence" value="ECO:0000314"/>
    <property type="project" value="UniProtKB"/>
</dbReference>
<dbReference type="GO" id="GO:0034097">
    <property type="term" value="P:response to cytokine"/>
    <property type="evidence" value="ECO:0000318"/>
    <property type="project" value="GO_Central"/>
</dbReference>
<dbReference type="GO" id="GO:0009725">
    <property type="term" value="P:response to hormone"/>
    <property type="evidence" value="ECO:0000318"/>
    <property type="project" value="GO_Central"/>
</dbReference>
<dbReference type="CDD" id="cd03585">
    <property type="entry name" value="NTR_TIMP"/>
    <property type="match status" value="1"/>
</dbReference>
<dbReference type="FunFam" id="2.40.50.120:FF:000007">
    <property type="entry name" value="Metalloproteinase inhibitor 2"/>
    <property type="match status" value="1"/>
</dbReference>
<dbReference type="FunFam" id="3.90.370.10:FF:000001">
    <property type="entry name" value="Metalloproteinase inhibitor 3"/>
    <property type="match status" value="1"/>
</dbReference>
<dbReference type="Gene3D" id="2.40.50.120">
    <property type="match status" value="1"/>
</dbReference>
<dbReference type="Gene3D" id="3.90.370.10">
    <property type="entry name" value="Tissue inhibitor of metalloproteinase-1. Chain B, domain 1"/>
    <property type="match status" value="1"/>
</dbReference>
<dbReference type="InterPro" id="IPR001134">
    <property type="entry name" value="Netrin_domain"/>
</dbReference>
<dbReference type="InterPro" id="IPR001820">
    <property type="entry name" value="TIMP"/>
</dbReference>
<dbReference type="InterPro" id="IPR008993">
    <property type="entry name" value="TIMP-like_OB-fold"/>
</dbReference>
<dbReference type="InterPro" id="IPR027465">
    <property type="entry name" value="TIMP_C"/>
</dbReference>
<dbReference type="InterPro" id="IPR030490">
    <property type="entry name" value="TIMP_CS"/>
</dbReference>
<dbReference type="PANTHER" id="PTHR11844">
    <property type="entry name" value="METALLOPROTEASE INHIBITOR"/>
    <property type="match status" value="1"/>
</dbReference>
<dbReference type="PANTHER" id="PTHR11844:SF24">
    <property type="entry name" value="METALLOPROTEINASE INHIBITOR 2"/>
    <property type="match status" value="1"/>
</dbReference>
<dbReference type="Pfam" id="PF00965">
    <property type="entry name" value="TIMP"/>
    <property type="match status" value="1"/>
</dbReference>
<dbReference type="SMART" id="SM00206">
    <property type="entry name" value="NTR"/>
    <property type="match status" value="1"/>
</dbReference>
<dbReference type="SUPFAM" id="SSF50242">
    <property type="entry name" value="TIMP-like"/>
    <property type="match status" value="1"/>
</dbReference>
<dbReference type="PROSITE" id="PS50189">
    <property type="entry name" value="NTR"/>
    <property type="match status" value="1"/>
</dbReference>
<dbReference type="PROSITE" id="PS00288">
    <property type="entry name" value="TIMP"/>
    <property type="match status" value="1"/>
</dbReference>
<sequence>MGAAARTLRLALGLLLLATLLRPADACSCSPVHPQQAFCNADVVIRAKAVSEKEVDSGNDIYGNPIKRIQYEIKQIKMFKGPEKDIEFIYTAPSSAVCGVSLDVGGKKEYLIAGKAEGDGKMHITLCDFIVPWDTLSTTQKKSLNHRYQMGCECKITRCPMIPCYISSPDECLWMDWVTEKNINGHQAKFFACIKRSDGSCAWYRGAAPPKQEFLDIEDP</sequence>
<feature type="signal peptide" evidence="4 6 10">
    <location>
        <begin position="1"/>
        <end position="26"/>
    </location>
</feature>
<feature type="chain" id="PRO_0000034335" description="Metalloproteinase inhibitor 2">
    <location>
        <begin position="27"/>
        <end position="220"/>
    </location>
</feature>
<feature type="domain" description="NTR" evidence="1">
    <location>
        <begin position="27"/>
        <end position="152"/>
    </location>
</feature>
<feature type="region of interest" description="Involved in metalloproteinase-binding" evidence="8 12">
    <location>
        <begin position="27"/>
        <end position="30"/>
    </location>
</feature>
<feature type="region of interest" description="Involved in metalloproteinase-binding" evidence="8 12">
    <location>
        <begin position="95"/>
        <end position="96"/>
    </location>
</feature>
<feature type="binding site" evidence="8 12">
    <location>
        <position position="27"/>
    </location>
    <ligand>
        <name>Zn(2+)</name>
        <dbReference type="ChEBI" id="CHEBI:29105"/>
        <note>ligand shared with metalloproteinase partner</note>
    </ligand>
</feature>
<feature type="site" description="Involved in metalloproteinase-binding" evidence="8 12">
    <location>
        <position position="40"/>
    </location>
</feature>
<feature type="site" description="Involved in metalloproteinase-binding" evidence="8 12">
    <location>
        <position position="61"/>
    </location>
</feature>
<feature type="site" description="Involved in metalloproteinase-binding" evidence="8 12">
    <location>
        <position position="67"/>
    </location>
</feature>
<feature type="disulfide bond" evidence="1 3">
    <location>
        <begin position="27"/>
        <end position="98"/>
    </location>
</feature>
<feature type="disulfide bond" evidence="1 3">
    <location>
        <begin position="29"/>
        <end position="127"/>
    </location>
</feature>
<feature type="disulfide bond" evidence="1 3">
    <location>
        <begin position="39"/>
        <end position="152"/>
    </location>
</feature>
<feature type="disulfide bond" evidence="1 3">
    <location>
        <begin position="154"/>
        <end position="201"/>
    </location>
</feature>
<feature type="disulfide bond" evidence="1 3">
    <location>
        <begin position="159"/>
        <end position="164"/>
    </location>
</feature>
<feature type="disulfide bond" evidence="1 3">
    <location>
        <begin position="172"/>
        <end position="193"/>
    </location>
</feature>
<feature type="sequence conflict" description="In Ref. 3; AAC50729." evidence="11" ref="3">
    <original>LAT</original>
    <variation>P</variation>
    <location>
        <begin position="17"/>
        <end position="19"/>
    </location>
</feature>
<feature type="sequence conflict" description="In Ref. 10." evidence="11" ref="10">
    <original>VIRAKAV</original>
    <variation>GKESGDP</variation>
    <location>
        <begin position="44"/>
        <end position="50"/>
    </location>
</feature>
<feature type="sequence conflict" description="In Ref. 6; AA sequence and 7; AA sequence." evidence="11" ref="6 7">
    <original>M</original>
    <variation>K</variation>
    <location>
        <position position="78"/>
    </location>
</feature>
<feature type="sequence conflict" description="In Ref. 6; AA sequence and 7; AA sequence." evidence="11" ref="6 7">
    <original>P</original>
    <variation>I</variation>
    <location>
        <position position="82"/>
    </location>
</feature>
<feature type="sequence conflict" description="In Ref. 5; CAA38400." evidence="11" ref="5">
    <original>A</original>
    <variation>V</variation>
    <location>
        <position position="96"/>
    </location>
</feature>
<feature type="sequence conflict" description="In Ref. 6; AA sequence and 7; AA sequence." evidence="11" ref="6 7">
    <original>S</original>
    <variation>E</variation>
    <location>
        <position position="101"/>
    </location>
</feature>
<feature type="sequence conflict" description="In Ref. 6; AA sequence and 7; AA sequence." evidence="11" ref="6 7">
    <location>
        <position position="118"/>
    </location>
</feature>
<feature type="sequence conflict" description="In Ref. 6; AA sequence and 7; AA sequence." evidence="11" ref="6 7">
    <original>M</original>
    <variation>R</variation>
    <location>
        <position position="122"/>
    </location>
</feature>
<feature type="sequence conflict" description="In Ref. 6; AA sequence and 7; AA sequence." evidence="11" ref="6 7">
    <original>M</original>
    <variation>Q</variation>
    <location>
        <position position="150"/>
    </location>
</feature>
<feature type="sequence conflict" description="In Ref. 6; AA sequence and 7; AA sequence." evidence="11" ref="6 7">
    <original>M</original>
    <variation>T</variation>
    <location>
        <position position="175"/>
    </location>
</feature>
<feature type="helix" evidence="13">
    <location>
        <begin position="34"/>
        <end position="40"/>
    </location>
</feature>
<feature type="strand" evidence="13">
    <location>
        <begin position="41"/>
        <end position="59"/>
    </location>
</feature>
<feature type="strand" evidence="15">
    <location>
        <begin position="61"/>
        <end position="63"/>
    </location>
</feature>
<feature type="strand" evidence="13">
    <location>
        <begin position="65"/>
        <end position="81"/>
    </location>
</feature>
<feature type="strand" evidence="13">
    <location>
        <begin position="88"/>
        <end position="91"/>
    </location>
</feature>
<feature type="helix" evidence="13">
    <location>
        <begin position="95"/>
        <end position="97"/>
    </location>
</feature>
<feature type="turn" evidence="15">
    <location>
        <begin position="104"/>
        <end position="107"/>
    </location>
</feature>
<feature type="strand" evidence="13">
    <location>
        <begin position="109"/>
        <end position="118"/>
    </location>
</feature>
<feature type="strand" evidence="13">
    <location>
        <begin position="121"/>
        <end position="123"/>
    </location>
</feature>
<feature type="strand" evidence="13">
    <location>
        <begin position="130"/>
        <end position="132"/>
    </location>
</feature>
<feature type="helix" evidence="13">
    <location>
        <begin position="133"/>
        <end position="135"/>
    </location>
</feature>
<feature type="helix" evidence="13">
    <location>
        <begin position="138"/>
        <end position="143"/>
    </location>
</feature>
<feature type="turn" evidence="13">
    <location>
        <begin position="144"/>
        <end position="148"/>
    </location>
</feature>
<feature type="helix" evidence="13">
    <location>
        <begin position="149"/>
        <end position="151"/>
    </location>
</feature>
<feature type="strand" evidence="13">
    <location>
        <begin position="154"/>
        <end position="158"/>
    </location>
</feature>
<feature type="strand" evidence="13">
    <location>
        <begin position="161"/>
        <end position="163"/>
    </location>
</feature>
<feature type="strand" evidence="13">
    <location>
        <begin position="171"/>
        <end position="174"/>
    </location>
</feature>
<feature type="helix" evidence="13">
    <location>
        <begin position="176"/>
        <end position="180"/>
    </location>
</feature>
<feature type="strand" evidence="14">
    <location>
        <begin position="181"/>
        <end position="185"/>
    </location>
</feature>
<feature type="helix" evidence="13">
    <location>
        <begin position="186"/>
        <end position="190"/>
    </location>
</feature>
<feature type="strand" evidence="13">
    <location>
        <begin position="192"/>
        <end position="195"/>
    </location>
</feature>
<feature type="strand" evidence="15">
    <location>
        <begin position="197"/>
        <end position="199"/>
    </location>
</feature>
<feature type="strand" evidence="13">
    <location>
        <begin position="201"/>
        <end position="204"/>
    </location>
</feature>
<protein>
    <recommendedName>
        <fullName>Metalloproteinase inhibitor 2</fullName>
    </recommendedName>
    <alternativeName>
        <fullName>CSC-21K</fullName>
    </alternativeName>
    <alternativeName>
        <fullName>Tissue inhibitor of metalloproteinases 2</fullName>
        <shortName>TIMP-2</shortName>
    </alternativeName>
</protein>
<name>TIMP2_HUMAN</name>
<organism>
    <name type="scientific">Homo sapiens</name>
    <name type="common">Human</name>
    <dbReference type="NCBI Taxonomy" id="9606"/>
    <lineage>
        <taxon>Eukaryota</taxon>
        <taxon>Metazoa</taxon>
        <taxon>Chordata</taxon>
        <taxon>Craniata</taxon>
        <taxon>Vertebrata</taxon>
        <taxon>Euteleostomi</taxon>
        <taxon>Mammalia</taxon>
        <taxon>Eutheria</taxon>
        <taxon>Euarchontoglires</taxon>
        <taxon>Primates</taxon>
        <taxon>Haplorrhini</taxon>
        <taxon>Catarrhini</taxon>
        <taxon>Hominidae</taxon>
        <taxon>Homo</taxon>
    </lineage>
</organism>
<keyword id="KW-0002">3D-structure</keyword>
<keyword id="KW-0903">Direct protein sequencing</keyword>
<keyword id="KW-1015">Disulfide bond</keyword>
<keyword id="KW-0479">Metal-binding</keyword>
<keyword id="KW-0481">Metalloenzyme inhibitor</keyword>
<keyword id="KW-0483">Metalloprotease inhibitor</keyword>
<keyword id="KW-0646">Protease inhibitor</keyword>
<keyword id="KW-1267">Proteomics identification</keyword>
<keyword id="KW-1185">Reference proteome</keyword>
<keyword id="KW-0964">Secreted</keyword>
<keyword id="KW-0732">Signal</keyword>
<keyword id="KW-0862">Zinc</keyword>
<gene>
    <name type="primary">TIMP2</name>
</gene>
<comment type="function">
    <text evidence="2 9 10">Complexes with metalloproteinases (such as collagenases) and irreversibly inactivates them by binding to their catalytic zinc cofactor. Known to act on MMP-1, MMP-2, MMP-3, MMP-7, MMP-8, MMP-9, MMP-10, MMP-13, MMP-14, MMP-15, MMP-16 and MMP-19.</text>
</comment>
<comment type="subunit">
    <text evidence="2 3 5">Interacts (via the C-terminal) with MMP2 (via the C-terminal PEX domain); the interaction inhibits the MMP2 activity.</text>
</comment>
<comment type="interaction">
    <interactant intactId="EBI-1033507">
        <id>P16035</id>
    </interactant>
    <interactant intactId="EBI-1390356">
        <id>P22830</id>
        <label>FECH</label>
    </interactant>
    <organismsDiffer>false</organismsDiffer>
    <experiments>2</experiments>
</comment>
<comment type="interaction">
    <interactant intactId="EBI-1033507">
        <id>P16035</id>
    </interactant>
    <interactant intactId="EBI-992788">
        <id>P50281</id>
        <label>MMP14</label>
    </interactant>
    <organismsDiffer>false</organismsDiffer>
    <experiments>4</experiments>
</comment>
<comment type="interaction">
    <interactant intactId="EBI-1033507">
        <id>P16035</id>
    </interactant>
    <interactant intactId="EBI-1033518">
        <id>P08253</id>
        <label>MMP2</label>
    </interactant>
    <organismsDiffer>false</organismsDiffer>
    <experiments>3</experiments>
</comment>
<comment type="interaction">
    <interactant intactId="EBI-1033507">
        <id>P16035</id>
    </interactant>
    <interactant intactId="EBI-947187">
        <id>Q9UHD9</id>
        <label>UBQLN2</label>
    </interactant>
    <organismsDiffer>false</organismsDiffer>
    <experiments>3</experiments>
</comment>
<comment type="subcellular location">
    <subcellularLocation>
        <location>Secreted</location>
    </subcellularLocation>
</comment>
<comment type="induction">
    <text evidence="7">Down-regulated by TGFB1.</text>
</comment>
<comment type="PTM">
    <text>The activity of TIMP2 is dependent on the presence of disulfide bonds.</text>
</comment>
<comment type="similarity">
    <text evidence="11">Belongs to the protease inhibitor I35 (TIMP) family.</text>
</comment>
<comment type="online information" name="Atlas of Genetics and Cytogenetics in Oncology and Haematology">
    <link uri="https://atlasgeneticsoncology.org/gene/42572/TIMP2"/>
</comment>
<accession>P16035</accession>
<accession>Q16121</accession>
<accession>Q93006</accession>
<accession>Q9UDF7</accession>
<proteinExistence type="evidence at protein level"/>
<reference key="1">
    <citation type="journal article" date="1990" name="J. Biol. Chem.">
        <title>Tissue inhibitor of metalloproteinases-2 (TIMP-2) mRNA expression in tumor cell lines and human tumor tissues.</title>
        <authorList>
            <person name="Stetler-Stevenson W.G."/>
            <person name="Brown P.D."/>
            <person name="Onisto M."/>
            <person name="Levy A.T."/>
            <person name="Liotta L.A."/>
        </authorList>
    </citation>
    <scope>NUCLEOTIDE SEQUENCE [MRNA]</scope>
    <scope>INDUCTION</scope>
</reference>
<reference key="2">
    <citation type="journal article" date="1990" name="Proc. Natl. Acad. Sci. U.S.A.">
        <title>cDNA cloning and expression of a metalloproteinase inhibitor related to tissue inhibitor of metalloproteinases.</title>
        <authorList>
            <person name="Boone T.C."/>
            <person name="Johnson M.J."/>
            <person name="de Clerck Y.A."/>
            <person name="Langley K.E."/>
        </authorList>
    </citation>
    <scope>NUCLEOTIDE SEQUENCE [MRNA]</scope>
</reference>
<reference key="3">
    <citation type="journal article" date="1996" name="J. Biol. Chem.">
        <title>Structure and characterization of the human tissue inhibitor of metalloproteinases-2 gene.</title>
        <authorList>
            <person name="Hammani K."/>
            <person name="Blakis A."/>
            <person name="Morsette D."/>
            <person name="Bowcock A."/>
            <person name="Schmutte C."/>
            <person name="Henriet P."/>
            <person name="Declerck Y.A."/>
        </authorList>
    </citation>
    <scope>NUCLEOTIDE SEQUENCE [GENOMIC DNA]</scope>
    <source>
        <tissue>Placenta</tissue>
    </source>
</reference>
<reference key="4">
    <citation type="journal article" date="2004" name="Genome Res.">
        <title>The status, quality, and expansion of the NIH full-length cDNA project: the Mammalian Gene Collection (MGC).</title>
        <authorList>
            <consortium name="The MGC Project Team"/>
        </authorList>
    </citation>
    <scope>NUCLEOTIDE SEQUENCE [LARGE SCALE MRNA]</scope>
    <source>
        <tissue>Placenta</tissue>
        <tissue>Skin</tissue>
    </source>
</reference>
<reference key="5">
    <citation type="submission" date="1990-08" db="EMBL/GenBank/DDBJ databases">
        <authorList>
            <person name="Malik K."/>
            <person name="Sejima H."/>
            <person name="Aoki T."/>
            <person name="Iwata K."/>
        </authorList>
    </citation>
    <scope>NUCLEOTIDE SEQUENCE OF 30-214</scope>
</reference>
<reference key="6">
    <citation type="journal article" date="1989" name="J. Biol. Chem.">
        <title>Tissue inhibitor of metalloproteinase (TIMP-2). A new member of the metalloproteinase inhibitor family.</title>
        <authorList>
            <person name="Stetler-Stevenson W.G."/>
            <person name="Krutzsch H.C."/>
            <person name="Liotta L.A."/>
        </authorList>
    </citation>
    <scope>PROTEIN SEQUENCE OF 27-219</scope>
    <scope>FUNCTION</scope>
</reference>
<reference key="7">
    <citation type="journal article" date="1992" name="Matrix Suppl.">
        <title>TIMP-2: identification and characterization of a new member of the metalloproteinase inhibitor family.</title>
        <authorList>
            <person name="Stetler-Stevenson W.G."/>
            <person name="Krutzsch H.C."/>
            <person name="Liotta L.A."/>
        </authorList>
    </citation>
    <scope>PROTEIN SEQUENCE OF 27-219</scope>
</reference>
<reference key="8">
    <citation type="journal article" date="1989" name="Proc. Natl. Acad. Sci. U.S.A.">
        <title>Human 72-kilodalton type IV collagenase forms a complex with a tissue inhibitor of metalloproteases designated TIMP-2.</title>
        <authorList>
            <person name="Goldberg G.I."/>
            <person name="Marmer B.L."/>
            <person name="Grant G.A."/>
            <person name="Eisen A.Z."/>
            <person name="Wilhelm S."/>
            <person name="He C."/>
        </authorList>
    </citation>
    <scope>PROTEIN SEQUENCE OF 30-51; 124-141 AND 159-173</scope>
    <scope>FUNCTION</scope>
</reference>
<reference key="9">
    <citation type="journal article" date="1992" name="FEBS Lett.">
        <title>Isolation and characterization of tissue inhibitors of metalloproteinases (TIMP-1 and TIMP-2) from human rheumatoid synovial fluid.</title>
        <authorList>
            <person name="Osthues A."/>
            <person name="Knaueper V."/>
            <person name="Oberhoff R."/>
            <person name="Reinke H."/>
            <person name="Tschesche H."/>
        </authorList>
    </citation>
    <scope>PROTEIN SEQUENCE OF 27-41</scope>
    <source>
        <tissue>Synovial fluid</tissue>
    </source>
</reference>
<reference key="10">
    <citation type="journal article" date="1994" name="Gene">
        <title>Characterization of the promoter of the gene encoding human tissue inhibitor of metalloproteinases-2 (TIMP-2).</title>
        <authorList>
            <person name="de Clerck Y.A."/>
            <person name="Darville M.I."/>
            <person name="Eeckhout Y."/>
            <person name="Rousseau G.G."/>
        </authorList>
    </citation>
    <scope>NUCLEOTIDE SEQUENCE [GENOMIC DNA] OF 1-50</scope>
</reference>
<reference key="11">
    <citation type="journal article" date="1991" name="J. Biol. Chem.">
        <title>Binding of tissue inhibitor of metalloproteinases 2 to two distinct sites on human 72-kDa gelatinase. Identification of a stabilization site.</title>
        <authorList>
            <person name="Howard E.W."/>
            <person name="Banda M.J."/>
        </authorList>
    </citation>
    <scope>INTERACTION WITH MMP2</scope>
</reference>
<reference key="12">
    <citation type="journal article" date="2001" name="J. Cancer Res. Clin. Oncol.">
        <title>Human cervical tumor cell (SiHa) surface alphavbeta3 integrin receptor has associated matrix metalloproteinase (MMP-2) activity.</title>
        <authorList>
            <person name="Chattopadhyay N."/>
            <person name="Mitra A."/>
            <person name="Frei E."/>
            <person name="Chatterjee A."/>
        </authorList>
    </citation>
    <scope>INTERACTION WITH MMP2</scope>
    <scope>FUNCTION</scope>
</reference>
<reference key="13">
    <citation type="journal article" date="1994" name="Biochemistry">
        <title>Solution structure of the active domain of tissue inhibitor of metalloproteinases-2. A new member of the OB fold protein family.</title>
        <authorList>
            <person name="Williamson R.A."/>
            <person name="Martorell G."/>
            <person name="Carr M.D."/>
            <person name="Murphy G."/>
            <person name="Docherty A.J.P."/>
            <person name="Freedman R.B."/>
            <person name="Feeney J."/>
        </authorList>
    </citation>
    <scope>STRUCTURE BY NMR OF 27-153</scope>
</reference>
<reference key="14">
    <citation type="journal article" date="1998" name="J. Biol. Chem.">
        <title>High resolution structure of the N-terminal domain of tissue inhibitor of metalloproteinases-2 and characterization of its interaction site with matrix metalloproteinase-3.</title>
        <authorList>
            <person name="Muskett F.W."/>
            <person name="Frenkiel T.A."/>
            <person name="Feeney J."/>
            <person name="Freedman R.B."/>
            <person name="Carr M.D."/>
            <person name="Williamson R.A."/>
        </authorList>
    </citation>
    <scope>STRUCTURE BY NMR OF 27-153</scope>
</reference>
<reference key="15">
    <citation type="journal article" date="1998" name="J. Mol. Biol.">
        <title>Three-dimensional structure of human tissue inhibitor of metalloproteinases-2 at 2.1-A resolution.</title>
        <authorList>
            <person name="Tuuttila A."/>
            <person name="Morgunova E."/>
            <person name="Bergmann U."/>
            <person name="Lindqvist Y."/>
            <person name="Maskos K."/>
            <person name="Fernandez-Catalan C."/>
            <person name="Bode W."/>
            <person name="Tryggvason K."/>
            <person name="Schneider G."/>
        </authorList>
    </citation>
    <scope>X-RAY CRYSTALLOGRAPHY (2.10 ANGSTROMS) OF 27-220</scope>
</reference>
<reference key="16">
    <citation type="journal article" date="2002" name="Proc. Natl. Acad. Sci. U.S.A.">
        <title>Structural insight into the complex formation of latent matrix metalloproteinase 2 with tissue inhibitor of metalloproteinase 2.</title>
        <authorList>
            <person name="Morgunova E."/>
            <person name="Tuuttila A."/>
            <person name="Bergmann U."/>
            <person name="Tryggvason K."/>
        </authorList>
    </citation>
    <scope>X-RAY CRYSTALLOGRAPHY (3.10 ANGSTROMS) IN COMPLEX WITH MMP-2</scope>
    <scope>DISULFIDE BOND</scope>
</reference>
<reference key="17">
    <citation type="journal article" date="2013" name="PLoS ONE">
        <title>Matrix metalloproteinase-10/TIMP-2 structure and analyses define conserved core interactions and diverse exosite interactions in MMP/TIMP complexes.</title>
        <authorList>
            <person name="Batra J."/>
            <person name="Soares A.S."/>
            <person name="Mehner C."/>
            <person name="Radisky E.S."/>
        </authorList>
    </citation>
    <scope>X-RAY CRYSTALLOGRAPHY (2.10 ANGSTROMS) OF 27-220 IN COMPLEX WITH MMP10 AND ZINC</scope>
</reference>
<evidence type="ECO:0000255" key="1">
    <source>
        <dbReference type="PROSITE-ProRule" id="PRU00295"/>
    </source>
</evidence>
<evidence type="ECO:0000269" key="2">
    <source>
    </source>
</evidence>
<evidence type="ECO:0000269" key="3">
    <source>
    </source>
</evidence>
<evidence type="ECO:0000269" key="4">
    <source>
    </source>
</evidence>
<evidence type="ECO:0000269" key="5">
    <source>
    </source>
</evidence>
<evidence type="ECO:0000269" key="6">
    <source>
    </source>
</evidence>
<evidence type="ECO:0000269" key="7">
    <source>
    </source>
</evidence>
<evidence type="ECO:0000269" key="8">
    <source>
    </source>
</evidence>
<evidence type="ECO:0000269" key="9">
    <source>
    </source>
</evidence>
<evidence type="ECO:0000269" key="10">
    <source>
    </source>
</evidence>
<evidence type="ECO:0000305" key="11"/>
<evidence type="ECO:0007744" key="12">
    <source>
        <dbReference type="PDB" id="4ILW"/>
    </source>
</evidence>
<evidence type="ECO:0007829" key="13">
    <source>
        <dbReference type="PDB" id="1BR9"/>
    </source>
</evidence>
<evidence type="ECO:0007829" key="14">
    <source>
        <dbReference type="PDB" id="1GXD"/>
    </source>
</evidence>
<evidence type="ECO:0007829" key="15">
    <source>
        <dbReference type="PDB" id="4ILW"/>
    </source>
</evidence>